<protein>
    <recommendedName>
        <fullName evidence="1">DNA ligase</fullName>
        <ecNumber evidence="1">6.5.1.2</ecNumber>
    </recommendedName>
    <alternativeName>
        <fullName evidence="1">Polydeoxyribonucleotide synthase [NAD(+)]</fullName>
    </alternativeName>
</protein>
<keyword id="KW-0227">DNA damage</keyword>
<keyword id="KW-0234">DNA repair</keyword>
<keyword id="KW-0235">DNA replication</keyword>
<keyword id="KW-0436">Ligase</keyword>
<keyword id="KW-0460">Magnesium</keyword>
<keyword id="KW-0464">Manganese</keyword>
<keyword id="KW-0479">Metal-binding</keyword>
<keyword id="KW-0520">NAD</keyword>
<keyword id="KW-1185">Reference proteome</keyword>
<keyword id="KW-0862">Zinc</keyword>
<accession>P72588</accession>
<name>DNLJ_SYNY3</name>
<dbReference type="EC" id="6.5.1.2" evidence="1"/>
<dbReference type="EMBL" id="BA000022">
    <property type="protein sequence ID" value="BAA16588.1"/>
    <property type="molecule type" value="Genomic_DNA"/>
</dbReference>
<dbReference type="PIR" id="S74436">
    <property type="entry name" value="S74436"/>
</dbReference>
<dbReference type="SMR" id="P72588"/>
<dbReference type="FunCoup" id="P72588">
    <property type="interactions" value="318"/>
</dbReference>
<dbReference type="IntAct" id="P72588">
    <property type="interactions" value="1"/>
</dbReference>
<dbReference type="STRING" id="1148.gene:10497443"/>
<dbReference type="PaxDb" id="1148-1651660"/>
<dbReference type="EnsemblBacteria" id="BAA16588">
    <property type="protein sequence ID" value="BAA16588"/>
    <property type="gene ID" value="BAA16588"/>
</dbReference>
<dbReference type="KEGG" id="syn:sll1209"/>
<dbReference type="eggNOG" id="COG0272">
    <property type="taxonomic scope" value="Bacteria"/>
</dbReference>
<dbReference type="InParanoid" id="P72588"/>
<dbReference type="PhylomeDB" id="P72588"/>
<dbReference type="Proteomes" id="UP000001425">
    <property type="component" value="Chromosome"/>
</dbReference>
<dbReference type="GO" id="GO:0005829">
    <property type="term" value="C:cytosol"/>
    <property type="evidence" value="ECO:0000318"/>
    <property type="project" value="GO_Central"/>
</dbReference>
<dbReference type="GO" id="GO:0003677">
    <property type="term" value="F:DNA binding"/>
    <property type="evidence" value="ECO:0007669"/>
    <property type="project" value="InterPro"/>
</dbReference>
<dbReference type="GO" id="GO:0003911">
    <property type="term" value="F:DNA ligase (NAD+) activity"/>
    <property type="evidence" value="ECO:0000318"/>
    <property type="project" value="GO_Central"/>
</dbReference>
<dbReference type="GO" id="GO:0046872">
    <property type="term" value="F:metal ion binding"/>
    <property type="evidence" value="ECO:0007669"/>
    <property type="project" value="UniProtKB-KW"/>
</dbReference>
<dbReference type="GO" id="GO:0006281">
    <property type="term" value="P:DNA repair"/>
    <property type="evidence" value="ECO:0007669"/>
    <property type="project" value="UniProtKB-KW"/>
</dbReference>
<dbReference type="GO" id="GO:0006260">
    <property type="term" value="P:DNA replication"/>
    <property type="evidence" value="ECO:0007669"/>
    <property type="project" value="UniProtKB-KW"/>
</dbReference>
<dbReference type="CDD" id="cd17748">
    <property type="entry name" value="BRCT_DNA_ligase_like"/>
    <property type="match status" value="1"/>
</dbReference>
<dbReference type="CDD" id="cd00114">
    <property type="entry name" value="LIGANc"/>
    <property type="match status" value="1"/>
</dbReference>
<dbReference type="FunFam" id="1.10.150.20:FF:000006">
    <property type="entry name" value="DNA ligase"/>
    <property type="match status" value="1"/>
</dbReference>
<dbReference type="FunFam" id="1.10.150.20:FF:000007">
    <property type="entry name" value="DNA ligase"/>
    <property type="match status" value="1"/>
</dbReference>
<dbReference type="FunFam" id="1.10.287.610:FF:000002">
    <property type="entry name" value="DNA ligase"/>
    <property type="match status" value="1"/>
</dbReference>
<dbReference type="FunFam" id="2.40.50.140:FF:000012">
    <property type="entry name" value="DNA ligase"/>
    <property type="match status" value="1"/>
</dbReference>
<dbReference type="FunFam" id="3.30.470.30:FF:000001">
    <property type="entry name" value="DNA ligase"/>
    <property type="match status" value="1"/>
</dbReference>
<dbReference type="FunFam" id="3.40.50.10190:FF:000086">
    <property type="entry name" value="DNA ligase"/>
    <property type="match status" value="1"/>
</dbReference>
<dbReference type="Gene3D" id="6.20.10.30">
    <property type="match status" value="1"/>
</dbReference>
<dbReference type="Gene3D" id="1.10.150.20">
    <property type="entry name" value="5' to 3' exonuclease, C-terminal subdomain"/>
    <property type="match status" value="2"/>
</dbReference>
<dbReference type="Gene3D" id="3.40.50.10190">
    <property type="entry name" value="BRCT domain"/>
    <property type="match status" value="1"/>
</dbReference>
<dbReference type="Gene3D" id="3.30.470.30">
    <property type="entry name" value="DNA ligase/mRNA capping enzyme"/>
    <property type="match status" value="1"/>
</dbReference>
<dbReference type="Gene3D" id="1.10.287.610">
    <property type="entry name" value="Helix hairpin bin"/>
    <property type="match status" value="1"/>
</dbReference>
<dbReference type="Gene3D" id="2.40.50.140">
    <property type="entry name" value="Nucleic acid-binding proteins"/>
    <property type="match status" value="1"/>
</dbReference>
<dbReference type="HAMAP" id="MF_01588">
    <property type="entry name" value="DNA_ligase_A"/>
    <property type="match status" value="1"/>
</dbReference>
<dbReference type="InterPro" id="IPR001357">
    <property type="entry name" value="BRCT_dom"/>
</dbReference>
<dbReference type="InterPro" id="IPR036420">
    <property type="entry name" value="BRCT_dom_sf"/>
</dbReference>
<dbReference type="InterPro" id="IPR041663">
    <property type="entry name" value="DisA/LigA_HHH"/>
</dbReference>
<dbReference type="InterPro" id="IPR001679">
    <property type="entry name" value="DNA_ligase"/>
</dbReference>
<dbReference type="InterPro" id="IPR018239">
    <property type="entry name" value="DNA_ligase_AS"/>
</dbReference>
<dbReference type="InterPro" id="IPR033136">
    <property type="entry name" value="DNA_ligase_CS"/>
</dbReference>
<dbReference type="InterPro" id="IPR013839">
    <property type="entry name" value="DNAligase_adenylation"/>
</dbReference>
<dbReference type="InterPro" id="IPR013840">
    <property type="entry name" value="DNAligase_N"/>
</dbReference>
<dbReference type="InterPro" id="IPR003583">
    <property type="entry name" value="Hlx-hairpin-Hlx_DNA-bd_motif"/>
</dbReference>
<dbReference type="InterPro" id="IPR012340">
    <property type="entry name" value="NA-bd_OB-fold"/>
</dbReference>
<dbReference type="InterPro" id="IPR004150">
    <property type="entry name" value="NAD_DNA_ligase_OB"/>
</dbReference>
<dbReference type="InterPro" id="IPR010994">
    <property type="entry name" value="RuvA_2-like"/>
</dbReference>
<dbReference type="InterPro" id="IPR004149">
    <property type="entry name" value="Znf_DNAligase_C4"/>
</dbReference>
<dbReference type="NCBIfam" id="TIGR00575">
    <property type="entry name" value="dnlj"/>
    <property type="match status" value="1"/>
</dbReference>
<dbReference type="NCBIfam" id="NF005932">
    <property type="entry name" value="PRK07956.1"/>
    <property type="match status" value="1"/>
</dbReference>
<dbReference type="PANTHER" id="PTHR23389">
    <property type="entry name" value="CHROMOSOME TRANSMISSION FIDELITY FACTOR 18"/>
    <property type="match status" value="1"/>
</dbReference>
<dbReference type="PANTHER" id="PTHR23389:SF9">
    <property type="entry name" value="DNA LIGASE"/>
    <property type="match status" value="1"/>
</dbReference>
<dbReference type="Pfam" id="PF00533">
    <property type="entry name" value="BRCT"/>
    <property type="match status" value="1"/>
</dbReference>
<dbReference type="Pfam" id="PF01653">
    <property type="entry name" value="DNA_ligase_aden"/>
    <property type="match status" value="1"/>
</dbReference>
<dbReference type="Pfam" id="PF03120">
    <property type="entry name" value="DNA_ligase_OB"/>
    <property type="match status" value="1"/>
</dbReference>
<dbReference type="Pfam" id="PF03119">
    <property type="entry name" value="DNA_ligase_ZBD"/>
    <property type="match status" value="1"/>
</dbReference>
<dbReference type="Pfam" id="PF12826">
    <property type="entry name" value="HHH_2"/>
    <property type="match status" value="1"/>
</dbReference>
<dbReference type="Pfam" id="PF14520">
    <property type="entry name" value="HHH_5"/>
    <property type="match status" value="1"/>
</dbReference>
<dbReference type="Pfam" id="PF22745">
    <property type="entry name" value="Nlig-Ia"/>
    <property type="match status" value="1"/>
</dbReference>
<dbReference type="PIRSF" id="PIRSF001604">
    <property type="entry name" value="LigA"/>
    <property type="match status" value="1"/>
</dbReference>
<dbReference type="SMART" id="SM00292">
    <property type="entry name" value="BRCT"/>
    <property type="match status" value="1"/>
</dbReference>
<dbReference type="SMART" id="SM00278">
    <property type="entry name" value="HhH1"/>
    <property type="match status" value="3"/>
</dbReference>
<dbReference type="SMART" id="SM00532">
    <property type="entry name" value="LIGANc"/>
    <property type="match status" value="1"/>
</dbReference>
<dbReference type="SUPFAM" id="SSF52113">
    <property type="entry name" value="BRCT domain"/>
    <property type="match status" value="1"/>
</dbReference>
<dbReference type="SUPFAM" id="SSF56091">
    <property type="entry name" value="DNA ligase/mRNA capping enzyme, catalytic domain"/>
    <property type="match status" value="1"/>
</dbReference>
<dbReference type="SUPFAM" id="SSF50249">
    <property type="entry name" value="Nucleic acid-binding proteins"/>
    <property type="match status" value="1"/>
</dbReference>
<dbReference type="SUPFAM" id="SSF47781">
    <property type="entry name" value="RuvA domain 2-like"/>
    <property type="match status" value="1"/>
</dbReference>
<dbReference type="PROSITE" id="PS50172">
    <property type="entry name" value="BRCT"/>
    <property type="match status" value="1"/>
</dbReference>
<dbReference type="PROSITE" id="PS01055">
    <property type="entry name" value="DNA_LIGASE_N1"/>
    <property type="match status" value="1"/>
</dbReference>
<dbReference type="PROSITE" id="PS01056">
    <property type="entry name" value="DNA_LIGASE_N2"/>
    <property type="match status" value="1"/>
</dbReference>
<feature type="chain" id="PRO_0000161768" description="DNA ligase">
    <location>
        <begin position="1"/>
        <end position="669"/>
    </location>
</feature>
<feature type="domain" description="BRCT" evidence="1">
    <location>
        <begin position="591"/>
        <end position="669"/>
    </location>
</feature>
<feature type="active site" description="N6-AMP-lysine intermediate" evidence="1">
    <location>
        <position position="114"/>
    </location>
</feature>
<feature type="binding site" evidence="1">
    <location>
        <begin position="31"/>
        <end position="35"/>
    </location>
    <ligand>
        <name>NAD(+)</name>
        <dbReference type="ChEBI" id="CHEBI:57540"/>
    </ligand>
</feature>
<feature type="binding site" evidence="1">
    <location>
        <begin position="80"/>
        <end position="81"/>
    </location>
    <ligand>
        <name>NAD(+)</name>
        <dbReference type="ChEBI" id="CHEBI:57540"/>
    </ligand>
</feature>
<feature type="binding site" evidence="1">
    <location>
        <position position="112"/>
    </location>
    <ligand>
        <name>NAD(+)</name>
        <dbReference type="ChEBI" id="CHEBI:57540"/>
    </ligand>
</feature>
<feature type="binding site" evidence="1">
    <location>
        <position position="135"/>
    </location>
    <ligand>
        <name>NAD(+)</name>
        <dbReference type="ChEBI" id="CHEBI:57540"/>
    </ligand>
</feature>
<feature type="binding site" evidence="1">
    <location>
        <position position="172"/>
    </location>
    <ligand>
        <name>NAD(+)</name>
        <dbReference type="ChEBI" id="CHEBI:57540"/>
    </ligand>
</feature>
<feature type="binding site" evidence="1">
    <location>
        <position position="289"/>
    </location>
    <ligand>
        <name>NAD(+)</name>
        <dbReference type="ChEBI" id="CHEBI:57540"/>
    </ligand>
</feature>
<feature type="binding site" evidence="1">
    <location>
        <position position="313"/>
    </location>
    <ligand>
        <name>NAD(+)</name>
        <dbReference type="ChEBI" id="CHEBI:57540"/>
    </ligand>
</feature>
<feature type="binding site" evidence="1">
    <location>
        <position position="407"/>
    </location>
    <ligand>
        <name>Zn(2+)</name>
        <dbReference type="ChEBI" id="CHEBI:29105"/>
    </ligand>
</feature>
<feature type="binding site" evidence="1">
    <location>
        <position position="410"/>
    </location>
    <ligand>
        <name>Zn(2+)</name>
        <dbReference type="ChEBI" id="CHEBI:29105"/>
    </ligand>
</feature>
<feature type="binding site" evidence="1">
    <location>
        <position position="425"/>
    </location>
    <ligand>
        <name>Zn(2+)</name>
        <dbReference type="ChEBI" id="CHEBI:29105"/>
    </ligand>
</feature>
<feature type="binding site" evidence="1">
    <location>
        <position position="430"/>
    </location>
    <ligand>
        <name>Zn(2+)</name>
        <dbReference type="ChEBI" id="CHEBI:29105"/>
    </ligand>
</feature>
<proteinExistence type="inferred from homology"/>
<gene>
    <name evidence="1" type="primary">ligA</name>
    <name type="synonym">lig</name>
    <name type="ordered locus">sll1209</name>
</gene>
<sequence length="669" mass="74602">MTTPDRLLQLRQQLQKASYAYYVLDAPVMEDSVYDQLYRELQRLEAENPELITPDSPTQRVGEQPASQFRSVAHNIPLYSLENAFNVQELQQWQERWQRIAPTIEKAEYVCELKIDGSAIALTYENGLLVRGVTRGDGTTGEEISQNIKTIRSIPVKLNLDNPPPTVEVRGEAFLPLEEFNRINHEREAQGESLFANPRNAAAGTLRQLDPKIVHQRRLQFFAYTLHLPGQEDKIQSQWQALEYLKKAGFMVNPHCQLCKGLDEVVAYFEDWEGARQRLPYMTDGVVVKINQYPLQRELGFTQKFPRWAIALKYPAEETPTVVKAIEVNVGRTGAVTPLAVMEPVQLAGTTVQRATLHNQDRIQELDIRVGDTVIIRKAGEIIPEVVRVMTELRPENTTPYIFPSHCPACGSPLVRPLEEAVIRCVNSSCSAILQGSLIHWASRNALDIQGLGEKVVITLLENRLVNSVADLYGLQVEQLLGLERFAQKSAEKLIAAIEVSKSQPWSRILFGLGIRHVGQVNAKLLSQQFPTVEKLSQASIPDLEGVYGIGPEIAEAVVNWFRNPGNQQLIQDLEELGLVLANQGIDQTKTDSGKLKGKTFVLTGTLPNLSRLEAQELIEQSGGKVTSSVSTKTDYVLLGDKPGSKAAKAESLGIKLLSEAEFLQLLEP</sequence>
<organism>
    <name type="scientific">Synechocystis sp. (strain ATCC 27184 / PCC 6803 / Kazusa)</name>
    <dbReference type="NCBI Taxonomy" id="1111708"/>
    <lineage>
        <taxon>Bacteria</taxon>
        <taxon>Bacillati</taxon>
        <taxon>Cyanobacteriota</taxon>
        <taxon>Cyanophyceae</taxon>
        <taxon>Synechococcales</taxon>
        <taxon>Merismopediaceae</taxon>
        <taxon>Synechocystis</taxon>
    </lineage>
</organism>
<comment type="function">
    <text evidence="1">DNA ligase that catalyzes the formation of phosphodiester linkages between 5'-phosphoryl and 3'-hydroxyl groups in double-stranded DNA using NAD as a coenzyme and as the energy source for the reaction. It is essential for DNA replication and repair of damaged DNA.</text>
</comment>
<comment type="catalytic activity">
    <reaction evidence="1">
        <text>NAD(+) + (deoxyribonucleotide)n-3'-hydroxyl + 5'-phospho-(deoxyribonucleotide)m = (deoxyribonucleotide)n+m + AMP + beta-nicotinamide D-nucleotide.</text>
        <dbReference type="EC" id="6.5.1.2"/>
    </reaction>
</comment>
<comment type="cofactor">
    <cofactor evidence="1">
        <name>Mg(2+)</name>
        <dbReference type="ChEBI" id="CHEBI:18420"/>
    </cofactor>
    <cofactor evidence="1">
        <name>Mn(2+)</name>
        <dbReference type="ChEBI" id="CHEBI:29035"/>
    </cofactor>
</comment>
<comment type="similarity">
    <text evidence="1">Belongs to the NAD-dependent DNA ligase family. LigA subfamily.</text>
</comment>
<reference key="1">
    <citation type="journal article" date="1996" name="DNA Res.">
        <title>Sequence analysis of the genome of the unicellular cyanobacterium Synechocystis sp. strain PCC6803. II. Sequence determination of the entire genome and assignment of potential protein-coding regions.</title>
        <authorList>
            <person name="Kaneko T."/>
            <person name="Sato S."/>
            <person name="Kotani H."/>
            <person name="Tanaka A."/>
            <person name="Asamizu E."/>
            <person name="Nakamura Y."/>
            <person name="Miyajima N."/>
            <person name="Hirosawa M."/>
            <person name="Sugiura M."/>
            <person name="Sasamoto S."/>
            <person name="Kimura T."/>
            <person name="Hosouchi T."/>
            <person name="Matsuno A."/>
            <person name="Muraki A."/>
            <person name="Nakazaki N."/>
            <person name="Naruo K."/>
            <person name="Okumura S."/>
            <person name="Shimpo S."/>
            <person name="Takeuchi C."/>
            <person name="Wada T."/>
            <person name="Watanabe A."/>
            <person name="Yamada M."/>
            <person name="Yasuda M."/>
            <person name="Tabata S."/>
        </authorList>
    </citation>
    <scope>NUCLEOTIDE SEQUENCE [LARGE SCALE GENOMIC DNA]</scope>
    <source>
        <strain>ATCC 27184 / PCC 6803 / Kazusa</strain>
    </source>
</reference>
<evidence type="ECO:0000255" key="1">
    <source>
        <dbReference type="HAMAP-Rule" id="MF_01588"/>
    </source>
</evidence>